<accession>Q1C1L1</accession>
<gene>
    <name evidence="1" type="primary">aaeB</name>
    <name type="ordered locus">YPA_3699</name>
</gene>
<sequence length="651" mass="72437">MTHPSFIRLRFAFKLSFAIVAALFLGFHLQLETPRWSVLTAAIVSAGPAFAAGGEPFSGAIRHRGWLRIIGTFIGCIGGLVIIVLTIRAPVLTLMLCCLWAGICTWISSLVRVENSYAFGLAGYTALIIIVTTGETPLLTPQFAVERCSEIVLGIVCAVMADLLFSPRSIKQDIDRLVDKVLVDQYRLLQLCIQPAEKSEIDRAWNELVKNTTSLNGMRSYLMMESSRWQRCNRRLQVLHTESLALITQACETYLVMSNHPEVISAELKTMLSEPAQTPAEIHQQMKKLRQFIAASHSEAIPHTISSWVGAATRYLLLSKGIQTNSSINQVEEDILAGDAPVKPISAEGHHAMINGLRTGIATAIGGLFWLWTGWTSGAGCMVMIAVVTSLAMRTPNPRRMALDFLVGVIIALPIGALYFMFIIPSTQQSMLLLCISLGVLAFIIGIEVQKRRLGSLGTLASTINIIVLSNPMIFNVRQFLDSALGQIVGCFVSLIVLLLIRDNAKDRTGRTLLNRFVYSAVSALTTNKTKRGENHLPALYQQLNQLLMMFPADIDKYRLALTLIIAHQRLNRTEIPVNAELSAFHKQIRSTAERVITVNNDQKRRYYFARLLQELDQYQQKLVDYQAADAVIRPVKRLTEMLRKYQSALI</sequence>
<reference key="1">
    <citation type="journal article" date="2006" name="J. Bacteriol.">
        <title>Complete genome sequence of Yersinia pestis strains Antiqua and Nepal516: evidence of gene reduction in an emerging pathogen.</title>
        <authorList>
            <person name="Chain P.S.G."/>
            <person name="Hu P."/>
            <person name="Malfatti S.A."/>
            <person name="Radnedge L."/>
            <person name="Larimer F."/>
            <person name="Vergez L.M."/>
            <person name="Worsham P."/>
            <person name="Chu M.C."/>
            <person name="Andersen G.L."/>
        </authorList>
    </citation>
    <scope>NUCLEOTIDE SEQUENCE [LARGE SCALE GENOMIC DNA]</scope>
    <source>
        <strain>Antiqua</strain>
    </source>
</reference>
<evidence type="ECO:0000255" key="1">
    <source>
        <dbReference type="HAMAP-Rule" id="MF_01545"/>
    </source>
</evidence>
<dbReference type="EMBL" id="CP000308">
    <property type="protein sequence ID" value="ABG15661.1"/>
    <property type="molecule type" value="Genomic_DNA"/>
</dbReference>
<dbReference type="RefSeq" id="WP_002210095.1">
    <property type="nucleotide sequence ID" value="NZ_CP009906.1"/>
</dbReference>
<dbReference type="SMR" id="Q1C1L1"/>
<dbReference type="GeneID" id="57975111"/>
<dbReference type="KEGG" id="ypa:YPA_3699"/>
<dbReference type="Proteomes" id="UP000001971">
    <property type="component" value="Chromosome"/>
</dbReference>
<dbReference type="GO" id="GO:0005886">
    <property type="term" value="C:plasma membrane"/>
    <property type="evidence" value="ECO:0007669"/>
    <property type="project" value="UniProtKB-SubCell"/>
</dbReference>
<dbReference type="GO" id="GO:0022857">
    <property type="term" value="F:transmembrane transporter activity"/>
    <property type="evidence" value="ECO:0007669"/>
    <property type="project" value="UniProtKB-UniRule"/>
</dbReference>
<dbReference type="GO" id="GO:0046942">
    <property type="term" value="P:carboxylic acid transport"/>
    <property type="evidence" value="ECO:0007669"/>
    <property type="project" value="InterPro"/>
</dbReference>
<dbReference type="HAMAP" id="MF_01545">
    <property type="entry name" value="AaeB"/>
    <property type="match status" value="1"/>
</dbReference>
<dbReference type="InterPro" id="IPR006726">
    <property type="entry name" value="PHBA_efflux_AaeB/fusaric-R"/>
</dbReference>
<dbReference type="InterPro" id="IPR023706">
    <property type="entry name" value="PHBA_efflux_pump_AaeB"/>
</dbReference>
<dbReference type="NCBIfam" id="NF007916">
    <property type="entry name" value="PRK10631.1"/>
    <property type="match status" value="1"/>
</dbReference>
<dbReference type="PANTHER" id="PTHR30509:SF9">
    <property type="entry name" value="MULTIDRUG RESISTANCE PROTEIN MDTO"/>
    <property type="match status" value="1"/>
</dbReference>
<dbReference type="PANTHER" id="PTHR30509">
    <property type="entry name" value="P-HYDROXYBENZOIC ACID EFFLUX PUMP SUBUNIT-RELATED"/>
    <property type="match status" value="1"/>
</dbReference>
<dbReference type="Pfam" id="PF04632">
    <property type="entry name" value="FUSC"/>
    <property type="match status" value="1"/>
</dbReference>
<name>AAEB_YERPA</name>
<proteinExistence type="inferred from homology"/>
<organism>
    <name type="scientific">Yersinia pestis bv. Antiqua (strain Antiqua)</name>
    <dbReference type="NCBI Taxonomy" id="360102"/>
    <lineage>
        <taxon>Bacteria</taxon>
        <taxon>Pseudomonadati</taxon>
        <taxon>Pseudomonadota</taxon>
        <taxon>Gammaproteobacteria</taxon>
        <taxon>Enterobacterales</taxon>
        <taxon>Yersiniaceae</taxon>
        <taxon>Yersinia</taxon>
    </lineage>
</organism>
<feature type="chain" id="PRO_0000300570" description="p-hydroxybenzoic acid efflux pump subunit AaeB">
    <location>
        <begin position="1"/>
        <end position="651"/>
    </location>
</feature>
<feature type="transmembrane region" description="Helical" evidence="1">
    <location>
        <begin position="11"/>
        <end position="31"/>
    </location>
</feature>
<feature type="transmembrane region" description="Helical" evidence="1">
    <location>
        <begin position="41"/>
        <end position="61"/>
    </location>
</feature>
<feature type="transmembrane region" description="Helical" evidence="1">
    <location>
        <begin position="67"/>
        <end position="87"/>
    </location>
</feature>
<feature type="transmembrane region" description="Helical" evidence="1">
    <location>
        <begin position="91"/>
        <end position="111"/>
    </location>
</feature>
<feature type="transmembrane region" description="Helical" evidence="1">
    <location>
        <begin position="119"/>
        <end position="139"/>
    </location>
</feature>
<feature type="transmembrane region" description="Helical" evidence="1">
    <location>
        <begin position="150"/>
        <end position="170"/>
    </location>
</feature>
<feature type="transmembrane region" description="Helical" evidence="1">
    <location>
        <begin position="368"/>
        <end position="388"/>
    </location>
</feature>
<feature type="transmembrane region" description="Helical" evidence="1">
    <location>
        <begin position="405"/>
        <end position="425"/>
    </location>
</feature>
<feature type="transmembrane region" description="Helical" evidence="1">
    <location>
        <begin position="429"/>
        <end position="449"/>
    </location>
</feature>
<feature type="transmembrane region" description="Helical" evidence="1">
    <location>
        <begin position="455"/>
        <end position="475"/>
    </location>
</feature>
<feature type="transmembrane region" description="Helical" evidence="1">
    <location>
        <begin position="481"/>
        <end position="501"/>
    </location>
</feature>
<keyword id="KW-0997">Cell inner membrane</keyword>
<keyword id="KW-1003">Cell membrane</keyword>
<keyword id="KW-0472">Membrane</keyword>
<keyword id="KW-0812">Transmembrane</keyword>
<keyword id="KW-1133">Transmembrane helix</keyword>
<keyword id="KW-0813">Transport</keyword>
<comment type="function">
    <text evidence="1">Forms an efflux pump with AaeA. Could function as a metabolic relief valve, allowing to eliminate certain compounds when they accumulate to high levels in the cell.</text>
</comment>
<comment type="subcellular location">
    <subcellularLocation>
        <location evidence="1">Cell inner membrane</location>
        <topology evidence="1">Multi-pass membrane protein</topology>
    </subcellularLocation>
</comment>
<comment type="similarity">
    <text evidence="1">Belongs to the aromatic acid exporter ArAE (TC 2.A.85) family.</text>
</comment>
<protein>
    <recommendedName>
        <fullName evidence="1">p-hydroxybenzoic acid efflux pump subunit AaeB</fullName>
        <shortName evidence="1">pHBA efflux pump protein B</shortName>
    </recommendedName>
</protein>